<gene>
    <name evidence="1" type="primary">diaA</name>
    <name type="ordered locus">SeHA_C3561</name>
</gene>
<evidence type="ECO:0000255" key="1">
    <source>
        <dbReference type="HAMAP-Rule" id="MF_01157"/>
    </source>
</evidence>
<keyword id="KW-0235">DNA replication</keyword>
<sequence>MLERIKVCFTESIQTQIAAAEALPDAISRAAMTLVHSLLNGNKILCCGNGTSAANAQHFAASMINRFETERPSLPAIALNTDNVVLTAIANDRLHDEVYAKQVRALGHAGDVLLAISTRGNSRDIVKAVEAAVTRDMTIVALTGYDGGELAGLLGPQDVEIRIPSHHSARIQEMHMLTVNCLCDLIDNTLFPHQDD</sequence>
<accession>B4TIY9</accession>
<dbReference type="EMBL" id="CP001120">
    <property type="protein sequence ID" value="ACF66587.1"/>
    <property type="molecule type" value="Genomic_DNA"/>
</dbReference>
<dbReference type="RefSeq" id="WP_000893481.1">
    <property type="nucleotide sequence ID" value="NC_011083.1"/>
</dbReference>
<dbReference type="SMR" id="B4TIY9"/>
<dbReference type="GeneID" id="66757607"/>
<dbReference type="KEGG" id="seh:SeHA_C3561"/>
<dbReference type="HOGENOM" id="CLU_080999_3_1_6"/>
<dbReference type="Proteomes" id="UP000001866">
    <property type="component" value="Chromosome"/>
</dbReference>
<dbReference type="GO" id="GO:0097367">
    <property type="term" value="F:carbohydrate derivative binding"/>
    <property type="evidence" value="ECO:0007669"/>
    <property type="project" value="InterPro"/>
</dbReference>
<dbReference type="GO" id="GO:1901135">
    <property type="term" value="P:carbohydrate derivative metabolic process"/>
    <property type="evidence" value="ECO:0007669"/>
    <property type="project" value="InterPro"/>
</dbReference>
<dbReference type="GO" id="GO:0006260">
    <property type="term" value="P:DNA replication"/>
    <property type="evidence" value="ECO:0007669"/>
    <property type="project" value="UniProtKB-UniRule"/>
</dbReference>
<dbReference type="CDD" id="cd05006">
    <property type="entry name" value="SIS_GmhA"/>
    <property type="match status" value="1"/>
</dbReference>
<dbReference type="FunFam" id="3.40.50.10490:FF:000006">
    <property type="entry name" value="DnaA initiator-associating protein DiaA"/>
    <property type="match status" value="1"/>
</dbReference>
<dbReference type="Gene3D" id="3.40.50.10490">
    <property type="entry name" value="Glucose-6-phosphate isomerase like protein, domain 1"/>
    <property type="match status" value="1"/>
</dbReference>
<dbReference type="HAMAP" id="MF_01157">
    <property type="entry name" value="SIS_DiaA"/>
    <property type="match status" value="1"/>
</dbReference>
<dbReference type="InterPro" id="IPR023070">
    <property type="entry name" value="DiaA"/>
</dbReference>
<dbReference type="InterPro" id="IPR035461">
    <property type="entry name" value="GmhA/DiaA"/>
</dbReference>
<dbReference type="InterPro" id="IPR001347">
    <property type="entry name" value="SIS_dom"/>
</dbReference>
<dbReference type="InterPro" id="IPR046348">
    <property type="entry name" value="SIS_dom_sf"/>
</dbReference>
<dbReference type="InterPro" id="IPR050099">
    <property type="entry name" value="SIS_GmhA/DiaA_subfam"/>
</dbReference>
<dbReference type="NCBIfam" id="NF008138">
    <property type="entry name" value="PRK10886.1"/>
    <property type="match status" value="1"/>
</dbReference>
<dbReference type="PANTHER" id="PTHR30390:SF6">
    <property type="entry name" value="DNAA INITIATOR-ASSOCIATING PROTEIN DIAA"/>
    <property type="match status" value="1"/>
</dbReference>
<dbReference type="PANTHER" id="PTHR30390">
    <property type="entry name" value="SEDOHEPTULOSE 7-PHOSPHATE ISOMERASE / DNAA INITIATOR-ASSOCIATING FACTOR FOR REPLICATION INITIATION"/>
    <property type="match status" value="1"/>
</dbReference>
<dbReference type="Pfam" id="PF13580">
    <property type="entry name" value="SIS_2"/>
    <property type="match status" value="1"/>
</dbReference>
<dbReference type="SUPFAM" id="SSF53697">
    <property type="entry name" value="SIS domain"/>
    <property type="match status" value="1"/>
</dbReference>
<dbReference type="PROSITE" id="PS51464">
    <property type="entry name" value="SIS"/>
    <property type="match status" value="1"/>
</dbReference>
<reference key="1">
    <citation type="journal article" date="2011" name="J. Bacteriol.">
        <title>Comparative genomics of 28 Salmonella enterica isolates: evidence for CRISPR-mediated adaptive sublineage evolution.</title>
        <authorList>
            <person name="Fricke W.F."/>
            <person name="Mammel M.K."/>
            <person name="McDermott P.F."/>
            <person name="Tartera C."/>
            <person name="White D.G."/>
            <person name="Leclerc J.E."/>
            <person name="Ravel J."/>
            <person name="Cebula T.A."/>
        </authorList>
    </citation>
    <scope>NUCLEOTIDE SEQUENCE [LARGE SCALE GENOMIC DNA]</scope>
    <source>
        <strain>SL476</strain>
    </source>
</reference>
<name>DIAA_SALHS</name>
<feature type="chain" id="PRO_1000137799" description="DnaA initiator-associating protein DiaA">
    <location>
        <begin position="1"/>
        <end position="196"/>
    </location>
</feature>
<feature type="domain" description="SIS" evidence="1">
    <location>
        <begin position="34"/>
        <end position="196"/>
    </location>
</feature>
<protein>
    <recommendedName>
        <fullName evidence="1">DnaA initiator-associating protein DiaA</fullName>
    </recommendedName>
</protein>
<proteinExistence type="inferred from homology"/>
<organism>
    <name type="scientific">Salmonella heidelberg (strain SL476)</name>
    <dbReference type="NCBI Taxonomy" id="454169"/>
    <lineage>
        <taxon>Bacteria</taxon>
        <taxon>Pseudomonadati</taxon>
        <taxon>Pseudomonadota</taxon>
        <taxon>Gammaproteobacteria</taxon>
        <taxon>Enterobacterales</taxon>
        <taxon>Enterobacteriaceae</taxon>
        <taxon>Salmonella</taxon>
    </lineage>
</organism>
<comment type="function">
    <text evidence="1">Required for the timely initiation of chromosomal replication via direct interactions with the DnaA initiator protein.</text>
</comment>
<comment type="subunit">
    <text evidence="1">Homotetramer; dimer of dimers.</text>
</comment>
<comment type="similarity">
    <text evidence="1">Belongs to the SIS family. DiaA subfamily.</text>
</comment>